<organism>
    <name type="scientific">Serratia proteamaculans (strain 568)</name>
    <dbReference type="NCBI Taxonomy" id="399741"/>
    <lineage>
        <taxon>Bacteria</taxon>
        <taxon>Pseudomonadati</taxon>
        <taxon>Pseudomonadota</taxon>
        <taxon>Gammaproteobacteria</taxon>
        <taxon>Enterobacterales</taxon>
        <taxon>Yersiniaceae</taxon>
        <taxon>Serratia</taxon>
    </lineage>
</organism>
<comment type="function">
    <text evidence="1">NQR complex catalyzes the reduction of ubiquinone-1 to ubiquinol by two successive reactions, coupled with the transport of Na(+) ions from the cytoplasm to the periplasm. The first step is catalyzed by NqrF, which accepts electrons from NADH and reduces ubiquinone-1 to ubisemiquinone by a one-electron transfer pathway.</text>
</comment>
<comment type="catalytic activity">
    <reaction evidence="1">
        <text>a ubiquinone + n Na(+)(in) + NADH + H(+) = a ubiquinol + n Na(+)(out) + NAD(+)</text>
        <dbReference type="Rhea" id="RHEA:47748"/>
        <dbReference type="Rhea" id="RHEA-COMP:9565"/>
        <dbReference type="Rhea" id="RHEA-COMP:9566"/>
        <dbReference type="ChEBI" id="CHEBI:15378"/>
        <dbReference type="ChEBI" id="CHEBI:16389"/>
        <dbReference type="ChEBI" id="CHEBI:17976"/>
        <dbReference type="ChEBI" id="CHEBI:29101"/>
        <dbReference type="ChEBI" id="CHEBI:57540"/>
        <dbReference type="ChEBI" id="CHEBI:57945"/>
        <dbReference type="EC" id="7.2.1.1"/>
    </reaction>
</comment>
<comment type="cofactor">
    <cofactor evidence="1">
        <name>[2Fe-2S] cluster</name>
        <dbReference type="ChEBI" id="CHEBI:190135"/>
    </cofactor>
    <text evidence="1">Binds 1 [2Fe-2S] cluster.</text>
</comment>
<comment type="cofactor">
    <cofactor evidence="1">
        <name>FAD</name>
        <dbReference type="ChEBI" id="CHEBI:57692"/>
    </cofactor>
</comment>
<comment type="subunit">
    <text evidence="1">Composed of six subunits; NqrA, NqrB, NqrC, NqrD, NqrE and NqrF.</text>
</comment>
<comment type="subcellular location">
    <subcellularLocation>
        <location evidence="1">Cell inner membrane</location>
        <topology evidence="1">Single-pass membrane protein</topology>
    </subcellularLocation>
</comment>
<comment type="similarity">
    <text evidence="1">Belongs to the NqrF family.</text>
</comment>
<protein>
    <recommendedName>
        <fullName evidence="1">Na(+)-translocating NADH-quinone reductase subunit F</fullName>
        <shortName evidence="1">Na(+)-NQR subunit F</shortName>
        <shortName evidence="1">Na(+)-translocating NQR subunit F</shortName>
        <ecNumber evidence="1">7.2.1.1</ecNumber>
    </recommendedName>
    <alternativeName>
        <fullName evidence="1">NQR complex subunit F</fullName>
    </alternativeName>
    <alternativeName>
        <fullName evidence="1">NQR-1 subunit F</fullName>
    </alternativeName>
</protein>
<gene>
    <name evidence="1" type="primary">nqrF</name>
    <name type="ordered locus">Spro_0958</name>
</gene>
<accession>A8GAC4</accession>
<reference key="1">
    <citation type="submission" date="2007-09" db="EMBL/GenBank/DDBJ databases">
        <title>Complete sequence of chromosome of Serratia proteamaculans 568.</title>
        <authorList>
            <consortium name="US DOE Joint Genome Institute"/>
            <person name="Copeland A."/>
            <person name="Lucas S."/>
            <person name="Lapidus A."/>
            <person name="Barry K."/>
            <person name="Glavina del Rio T."/>
            <person name="Dalin E."/>
            <person name="Tice H."/>
            <person name="Pitluck S."/>
            <person name="Chain P."/>
            <person name="Malfatti S."/>
            <person name="Shin M."/>
            <person name="Vergez L."/>
            <person name="Schmutz J."/>
            <person name="Larimer F."/>
            <person name="Land M."/>
            <person name="Hauser L."/>
            <person name="Kyrpides N."/>
            <person name="Kim E."/>
            <person name="Taghavi S."/>
            <person name="Newman L."/>
            <person name="Vangronsveld J."/>
            <person name="van der Lelie D."/>
            <person name="Richardson P."/>
        </authorList>
    </citation>
    <scope>NUCLEOTIDE SEQUENCE [LARGE SCALE GENOMIC DNA]</scope>
    <source>
        <strain>568</strain>
    </source>
</reference>
<proteinExistence type="inferred from homology"/>
<evidence type="ECO:0000255" key="1">
    <source>
        <dbReference type="HAMAP-Rule" id="MF_00430"/>
    </source>
</evidence>
<sequence length="407" mass="45415">MEIILGVAMFTGIVMVLVLLILFAKSRLVNTGDIAVEVNGDLDKSFTAPAGDKLLNMLSSQGIFVSSACGGGGSCGQCRVVIKEGGGDILPTELSHINKREAKEGCRLACQVNVKQNLKIELPEEIFGVKKWECEVISNDNKATFIKELKLKIPDGEDVPFRAGGFIQIEAPAHDISYADFDVPDEYRGDWDKFNLFRYRSVVNETTVRAYSMANYPDEKGIIMLNVRIATPPPRDPDVPPGIMSSYIWSLKAGDKVTISGPFGEFFAKDTDAEMIFIGGGAGMAPMRSHIFDQLNRLKSKRKITFWYGARSLREMFYEEDFNQLQAENENFTWHVALSDPQPEDNWTGYTGFIHNVLLENYLRNHPAPEDCEFYMCGPPMMNAAVIKMLKDLGVEDENIMLDDFGG</sequence>
<name>NQRF_SERP5</name>
<feature type="chain" id="PRO_1000080593" description="Na(+)-translocating NADH-quinone reductase subunit F">
    <location>
        <begin position="1"/>
        <end position="407"/>
    </location>
</feature>
<feature type="transmembrane region" description="Helical" evidence="1">
    <location>
        <begin position="3"/>
        <end position="23"/>
    </location>
</feature>
<feature type="domain" description="2Fe-2S ferredoxin-type" evidence="1">
    <location>
        <begin position="32"/>
        <end position="126"/>
    </location>
</feature>
<feature type="domain" description="FAD-binding FR-type" evidence="1">
    <location>
        <begin position="129"/>
        <end position="269"/>
    </location>
</feature>
<feature type="binding site" evidence="1">
    <location>
        <position position="69"/>
    </location>
    <ligand>
        <name>[2Fe-2S] cluster</name>
        <dbReference type="ChEBI" id="CHEBI:190135"/>
    </ligand>
</feature>
<feature type="binding site" evidence="1">
    <location>
        <position position="75"/>
    </location>
    <ligand>
        <name>[2Fe-2S] cluster</name>
        <dbReference type="ChEBI" id="CHEBI:190135"/>
    </ligand>
</feature>
<feature type="binding site" evidence="1">
    <location>
        <position position="78"/>
    </location>
    <ligand>
        <name>[2Fe-2S] cluster</name>
        <dbReference type="ChEBI" id="CHEBI:190135"/>
    </ligand>
</feature>
<feature type="binding site" evidence="1">
    <location>
        <position position="110"/>
    </location>
    <ligand>
        <name>[2Fe-2S] cluster</name>
        <dbReference type="ChEBI" id="CHEBI:190135"/>
    </ligand>
</feature>
<keyword id="KW-0001">2Fe-2S</keyword>
<keyword id="KW-0997">Cell inner membrane</keyword>
<keyword id="KW-1003">Cell membrane</keyword>
<keyword id="KW-0274">FAD</keyword>
<keyword id="KW-0285">Flavoprotein</keyword>
<keyword id="KW-0406">Ion transport</keyword>
<keyword id="KW-0408">Iron</keyword>
<keyword id="KW-0411">Iron-sulfur</keyword>
<keyword id="KW-0472">Membrane</keyword>
<keyword id="KW-0479">Metal-binding</keyword>
<keyword id="KW-0520">NAD</keyword>
<keyword id="KW-0915">Sodium</keyword>
<keyword id="KW-0739">Sodium transport</keyword>
<keyword id="KW-1278">Translocase</keyword>
<keyword id="KW-0812">Transmembrane</keyword>
<keyword id="KW-1133">Transmembrane helix</keyword>
<keyword id="KW-0813">Transport</keyword>
<keyword id="KW-0830">Ubiquinone</keyword>
<dbReference type="EC" id="7.2.1.1" evidence="1"/>
<dbReference type="EMBL" id="CP000826">
    <property type="protein sequence ID" value="ABV40064.1"/>
    <property type="molecule type" value="Genomic_DNA"/>
</dbReference>
<dbReference type="SMR" id="A8GAC4"/>
<dbReference type="STRING" id="399741.Spro_0958"/>
<dbReference type="KEGG" id="spe:Spro_0958"/>
<dbReference type="eggNOG" id="COG2871">
    <property type="taxonomic scope" value="Bacteria"/>
</dbReference>
<dbReference type="HOGENOM" id="CLU_003827_7_2_6"/>
<dbReference type="OrthoDB" id="9806195at2"/>
<dbReference type="GO" id="GO:0005886">
    <property type="term" value="C:plasma membrane"/>
    <property type="evidence" value="ECO:0007669"/>
    <property type="project" value="UniProtKB-SubCell"/>
</dbReference>
<dbReference type="GO" id="GO:0051537">
    <property type="term" value="F:2 iron, 2 sulfur cluster binding"/>
    <property type="evidence" value="ECO:0007669"/>
    <property type="project" value="UniProtKB-KW"/>
</dbReference>
<dbReference type="GO" id="GO:0009055">
    <property type="term" value="F:electron transfer activity"/>
    <property type="evidence" value="ECO:0007669"/>
    <property type="project" value="UniProtKB-UniRule"/>
</dbReference>
<dbReference type="GO" id="GO:0046872">
    <property type="term" value="F:metal ion binding"/>
    <property type="evidence" value="ECO:0007669"/>
    <property type="project" value="UniProtKB-KW"/>
</dbReference>
<dbReference type="GO" id="GO:0016655">
    <property type="term" value="F:oxidoreductase activity, acting on NAD(P)H, quinone or similar compound as acceptor"/>
    <property type="evidence" value="ECO:0007669"/>
    <property type="project" value="InterPro"/>
</dbReference>
<dbReference type="GO" id="GO:0006814">
    <property type="term" value="P:sodium ion transport"/>
    <property type="evidence" value="ECO:0007669"/>
    <property type="project" value="UniProtKB-UniRule"/>
</dbReference>
<dbReference type="CDD" id="cd06188">
    <property type="entry name" value="NADH_quinone_reductase"/>
    <property type="match status" value="1"/>
</dbReference>
<dbReference type="FunFam" id="2.40.30.10:FF:000064">
    <property type="entry name" value="Na(+)-translocating NADH-quinone reductase subunit F"/>
    <property type="match status" value="1"/>
</dbReference>
<dbReference type="FunFam" id="3.40.50.80:FF:000014">
    <property type="entry name" value="Na(+)-translocating NADH-quinone reductase subunit F"/>
    <property type="match status" value="1"/>
</dbReference>
<dbReference type="Gene3D" id="3.10.20.30">
    <property type="match status" value="1"/>
</dbReference>
<dbReference type="Gene3D" id="3.40.50.80">
    <property type="entry name" value="Nucleotide-binding domain of ferredoxin-NADP reductase (FNR) module"/>
    <property type="match status" value="1"/>
</dbReference>
<dbReference type="Gene3D" id="2.40.30.10">
    <property type="entry name" value="Translation factors"/>
    <property type="match status" value="1"/>
</dbReference>
<dbReference type="HAMAP" id="MF_00430">
    <property type="entry name" value="NqrF"/>
    <property type="match status" value="1"/>
</dbReference>
<dbReference type="InterPro" id="IPR036010">
    <property type="entry name" value="2Fe-2S_ferredoxin-like_sf"/>
</dbReference>
<dbReference type="InterPro" id="IPR001041">
    <property type="entry name" value="2Fe-2S_ferredoxin-type"/>
</dbReference>
<dbReference type="InterPro" id="IPR012675">
    <property type="entry name" value="Beta-grasp_dom_sf"/>
</dbReference>
<dbReference type="InterPro" id="IPR008333">
    <property type="entry name" value="Cbr1-like_FAD-bd_dom"/>
</dbReference>
<dbReference type="InterPro" id="IPR017927">
    <property type="entry name" value="FAD-bd_FR_type"/>
</dbReference>
<dbReference type="InterPro" id="IPR001709">
    <property type="entry name" value="Flavoprot_Pyr_Nucl_cyt_Rdtase"/>
</dbReference>
<dbReference type="InterPro" id="IPR039261">
    <property type="entry name" value="FNR_nucleotide-bd"/>
</dbReference>
<dbReference type="InterPro" id="IPR010205">
    <property type="entry name" value="NqrF"/>
</dbReference>
<dbReference type="InterPro" id="IPR001433">
    <property type="entry name" value="OxRdtase_FAD/NAD-bd"/>
</dbReference>
<dbReference type="InterPro" id="IPR017938">
    <property type="entry name" value="Riboflavin_synthase-like_b-brl"/>
</dbReference>
<dbReference type="NCBIfam" id="TIGR01941">
    <property type="entry name" value="nqrF"/>
    <property type="match status" value="1"/>
</dbReference>
<dbReference type="PANTHER" id="PTHR43644">
    <property type="entry name" value="NA(+)-TRANSLOCATING NADH-QUINONE REDUCTASE SUBUNIT"/>
    <property type="match status" value="1"/>
</dbReference>
<dbReference type="PANTHER" id="PTHR43644:SF1">
    <property type="entry name" value="NAD(P)H-FLAVIN REDUCTASE"/>
    <property type="match status" value="1"/>
</dbReference>
<dbReference type="Pfam" id="PF00970">
    <property type="entry name" value="FAD_binding_6"/>
    <property type="match status" value="1"/>
</dbReference>
<dbReference type="Pfam" id="PF00111">
    <property type="entry name" value="Fer2"/>
    <property type="match status" value="1"/>
</dbReference>
<dbReference type="Pfam" id="PF00175">
    <property type="entry name" value="NAD_binding_1"/>
    <property type="match status" value="1"/>
</dbReference>
<dbReference type="PIRSF" id="PIRSF000044">
    <property type="entry name" value="Cis_Diol_DH_RD"/>
    <property type="match status" value="1"/>
</dbReference>
<dbReference type="PRINTS" id="PR00371">
    <property type="entry name" value="FPNCR"/>
</dbReference>
<dbReference type="SUPFAM" id="SSF54292">
    <property type="entry name" value="2Fe-2S ferredoxin-like"/>
    <property type="match status" value="1"/>
</dbReference>
<dbReference type="SUPFAM" id="SSF52343">
    <property type="entry name" value="Ferredoxin reductase-like, C-terminal NADP-linked domain"/>
    <property type="match status" value="1"/>
</dbReference>
<dbReference type="SUPFAM" id="SSF63380">
    <property type="entry name" value="Riboflavin synthase domain-like"/>
    <property type="match status" value="1"/>
</dbReference>
<dbReference type="PROSITE" id="PS51085">
    <property type="entry name" value="2FE2S_FER_2"/>
    <property type="match status" value="1"/>
</dbReference>
<dbReference type="PROSITE" id="PS51384">
    <property type="entry name" value="FAD_FR"/>
    <property type="match status" value="1"/>
</dbReference>